<organism>
    <name type="scientific">Xenopus laevis</name>
    <name type="common">African clawed frog</name>
    <dbReference type="NCBI Taxonomy" id="8355"/>
    <lineage>
        <taxon>Eukaryota</taxon>
        <taxon>Metazoa</taxon>
        <taxon>Chordata</taxon>
        <taxon>Craniata</taxon>
        <taxon>Vertebrata</taxon>
        <taxon>Euteleostomi</taxon>
        <taxon>Amphibia</taxon>
        <taxon>Batrachia</taxon>
        <taxon>Anura</taxon>
        <taxon>Pipoidea</taxon>
        <taxon>Pipidae</taxon>
        <taxon>Xenopodinae</taxon>
        <taxon>Xenopus</taxon>
        <taxon>Xenopus</taxon>
    </lineage>
</organism>
<sequence>MAGLKGLLFGGILFAMCGGLSEGQKKKEMVLSDKVGQLMDWASKRPVIRMNGDKFRRFIKSPPRNYSVVVMFTALQAHRQCVVCKQADEEYQILANSWRYSSAFTNRIFFAVVDFDEGSDVFQMLNMNSAPTFINFPPKGKPKKGDTYELQVRGFAAEQLARWVADRTDVNIRVIRPPNYAGPLMLGLLLAVIGGLVYLRRSNLDFLNNKTGWALAALCFVLAMTSGQMWNHIRGPPYAHKNPHTNQVNYIHGSSQAQFVAETHIVLLFNGAVTLGMVLLHEAATSDLDVGKRKIMCIAGITLVVIFFSWLLSVFRSKYHGYPYSFLMT</sequence>
<dbReference type="EMBL" id="BC082850">
    <property type="protein sequence ID" value="AAH82850.1"/>
    <property type="molecule type" value="mRNA"/>
</dbReference>
<dbReference type="RefSeq" id="NP_001088056.1">
    <property type="nucleotide sequence ID" value="NM_001094587.1"/>
</dbReference>
<dbReference type="SMR" id="Q63ZR0"/>
<dbReference type="BioGRID" id="104830">
    <property type="interactions" value="1"/>
</dbReference>
<dbReference type="GlyCosmos" id="Q63ZR0">
    <property type="glycosylation" value="1 site, No reported glycans"/>
</dbReference>
<dbReference type="DNASU" id="494750"/>
<dbReference type="GeneID" id="494750"/>
<dbReference type="KEGG" id="xla:494750"/>
<dbReference type="AGR" id="Xenbase:XB-GENE-998609"/>
<dbReference type="CTD" id="494750"/>
<dbReference type="Xenbase" id="XB-GENE-998609">
    <property type="gene designation" value="magt1.L"/>
</dbReference>
<dbReference type="OrthoDB" id="67566at2759"/>
<dbReference type="UniPathway" id="UPA00378"/>
<dbReference type="Proteomes" id="UP000186698">
    <property type="component" value="Chromosome 8L"/>
</dbReference>
<dbReference type="Bgee" id="494750">
    <property type="expression patterns" value="Expressed in gastrula and 19 other cell types or tissues"/>
</dbReference>
<dbReference type="GO" id="GO:0008250">
    <property type="term" value="C:oligosaccharyltransferase complex"/>
    <property type="evidence" value="ECO:0000318"/>
    <property type="project" value="GO_Central"/>
</dbReference>
<dbReference type="GO" id="GO:0005886">
    <property type="term" value="C:plasma membrane"/>
    <property type="evidence" value="ECO:0007669"/>
    <property type="project" value="UniProtKB-SubCell"/>
</dbReference>
<dbReference type="GO" id="GO:0018279">
    <property type="term" value="P:protein N-linked glycosylation via asparagine"/>
    <property type="evidence" value="ECO:0000318"/>
    <property type="project" value="GO_Central"/>
</dbReference>
<dbReference type="CDD" id="cd02947">
    <property type="entry name" value="TRX_family"/>
    <property type="match status" value="1"/>
</dbReference>
<dbReference type="FunFam" id="3.40.30.10:FF:000009">
    <property type="entry name" value="Tumor suppressor candidate 3"/>
    <property type="match status" value="1"/>
</dbReference>
<dbReference type="Gene3D" id="3.40.30.10">
    <property type="entry name" value="Glutaredoxin"/>
    <property type="match status" value="1"/>
</dbReference>
<dbReference type="InterPro" id="IPR021149">
    <property type="entry name" value="OligosaccharylTrfase_OST3/OST6"/>
</dbReference>
<dbReference type="InterPro" id="IPR036249">
    <property type="entry name" value="Thioredoxin-like_sf"/>
</dbReference>
<dbReference type="PANTHER" id="PTHR12692">
    <property type="entry name" value="DOLICHYL-DIPHOSPHOOLIGOSACCHARIDE--PROTEIN GLYCOSYLTRANSFERASE-RELATED"/>
    <property type="match status" value="1"/>
</dbReference>
<dbReference type="PANTHER" id="PTHR12692:SF2">
    <property type="entry name" value="MAGNESIUM TRANSPORTER PROTEIN 1"/>
    <property type="match status" value="1"/>
</dbReference>
<dbReference type="Pfam" id="PF04756">
    <property type="entry name" value="OST3_OST6"/>
    <property type="match status" value="1"/>
</dbReference>
<dbReference type="SUPFAM" id="SSF52833">
    <property type="entry name" value="Thioredoxin-like"/>
    <property type="match status" value="1"/>
</dbReference>
<gene>
    <name evidence="3" type="primary">magt1</name>
</gene>
<feature type="signal peptide" evidence="4">
    <location>
        <begin position="1"/>
        <end position="23"/>
    </location>
</feature>
<feature type="chain" id="PRO_0000246062" description="Dolichyl-diphosphooligosaccharide--protein glycosyltransferase subunit MAGT1">
    <location>
        <begin position="24"/>
        <end position="329"/>
    </location>
</feature>
<feature type="topological domain" description="Extracellular" evidence="4">
    <location>
        <begin position="24"/>
        <end position="178"/>
    </location>
</feature>
<feature type="transmembrane region" description="Helical" evidence="4">
    <location>
        <begin position="179"/>
        <end position="199"/>
    </location>
</feature>
<feature type="topological domain" description="Cytoplasmic" evidence="4">
    <location>
        <begin position="200"/>
        <end position="212"/>
    </location>
</feature>
<feature type="transmembrane region" description="Helical" evidence="4">
    <location>
        <begin position="213"/>
        <end position="233"/>
    </location>
</feature>
<feature type="topological domain" description="Extracellular" evidence="4">
    <location>
        <begin position="234"/>
        <end position="258"/>
    </location>
</feature>
<feature type="transmembrane region" description="Helical" evidence="4">
    <location>
        <begin position="259"/>
        <end position="279"/>
    </location>
</feature>
<feature type="topological domain" description="Cytoplasmic" evidence="4">
    <location>
        <begin position="280"/>
        <end position="294"/>
    </location>
</feature>
<feature type="transmembrane region" description="Helical" evidence="4">
    <location>
        <begin position="295"/>
        <end position="315"/>
    </location>
</feature>
<feature type="topological domain" description="Extracellular" evidence="4">
    <location>
        <begin position="316"/>
        <end position="329"/>
    </location>
</feature>
<feature type="domain" description="Thioredoxin">
    <location>
        <begin position="41"/>
        <end position="169"/>
    </location>
</feature>
<feature type="glycosylation site" description="N-linked (GlcNAc...) asparagine" evidence="4">
    <location>
        <position position="65"/>
    </location>
</feature>
<feature type="disulfide bond" description="Redox-active" evidence="1">
    <location>
        <begin position="81"/>
        <end position="84"/>
    </location>
</feature>
<reference key="1">
    <citation type="submission" date="2004-09" db="EMBL/GenBank/DDBJ databases">
        <authorList>
            <consortium name="NIH - Xenopus Gene Collection (XGC) project"/>
        </authorList>
    </citation>
    <scope>NUCLEOTIDE SEQUENCE [LARGE SCALE MRNA]</scope>
    <source>
        <tissue>Embryo</tissue>
    </source>
</reference>
<protein>
    <recommendedName>
        <fullName>Dolichyl-diphosphooligosaccharide--protein glycosyltransferase subunit MAGT1</fullName>
        <shortName>Oligosaccharyl transferase subunit MAGT1</shortName>
    </recommendedName>
    <alternativeName>
        <fullName evidence="3">Magnesium transporter protein 1</fullName>
        <shortName>MagT1</shortName>
    </alternativeName>
</protein>
<keyword id="KW-1003">Cell membrane</keyword>
<keyword id="KW-1015">Disulfide bond</keyword>
<keyword id="KW-0256">Endoplasmic reticulum</keyword>
<keyword id="KW-0325">Glycoprotein</keyword>
<keyword id="KW-0460">Magnesium</keyword>
<keyword id="KW-0472">Membrane</keyword>
<keyword id="KW-1185">Reference proteome</keyword>
<keyword id="KW-0732">Signal</keyword>
<keyword id="KW-0812">Transmembrane</keyword>
<keyword id="KW-1133">Transmembrane helix</keyword>
<keyword id="KW-0813">Transport</keyword>
<name>MAGT1_XENLA</name>
<proteinExistence type="evidence at transcript level"/>
<evidence type="ECO:0000250" key="1"/>
<evidence type="ECO:0000250" key="2">
    <source>
        <dbReference type="UniProtKB" id="Q9CQY5"/>
    </source>
</evidence>
<evidence type="ECO:0000250" key="3">
    <source>
        <dbReference type="UniProtKB" id="Q9H0U3"/>
    </source>
</evidence>
<evidence type="ECO:0000255" key="4"/>
<evidence type="ECO:0000305" key="5"/>
<accession>Q63ZR0</accession>
<comment type="function">
    <text evidence="2 3">Accessory component of the STT3B-containing form of the N-oligosaccharyl transferase (OST) complex which catalyzes the transfer of a high mannose oligosaccharide from a lipid-linked oligosaccharide donor to an asparagine residue within an Asn-X-Ser/Thr consensus motif in nascent polypeptide chains. May be involved in substrate-specific N-glycosylation involving acceptor sites that are near cysteine residues. Could indirectly play a role in Mg(2+) transport in epithelial cells.</text>
</comment>
<comment type="pathway">
    <text evidence="3">Protein modification; protein glycosylation.</text>
</comment>
<comment type="subunit">
    <text evidence="3">Accessory component of the STT3B-containing form of the oligosaccharyltransferase (OST) complex.</text>
</comment>
<comment type="subcellular location">
    <subcellularLocation>
        <location evidence="3">Cell membrane</location>
        <topology evidence="3">Multi-pass membrane protein</topology>
    </subcellularLocation>
    <subcellularLocation>
        <location evidence="3">Endoplasmic reticulum</location>
    </subcellularLocation>
    <subcellularLocation>
        <location evidence="1">Endoplasmic reticulum membrane</location>
        <topology evidence="1">Multi-pass membrane protein</topology>
    </subcellularLocation>
</comment>
<comment type="similarity">
    <text evidence="5">Belongs to the OST3/OST6 family.</text>
</comment>